<dbReference type="EC" id="5.6.1.7" evidence="1"/>
<dbReference type="EMBL" id="CP000539">
    <property type="protein sequence ID" value="ABM40943.1"/>
    <property type="molecule type" value="Genomic_DNA"/>
</dbReference>
<dbReference type="SMR" id="A1W3W8"/>
<dbReference type="STRING" id="232721.Ajs_0699"/>
<dbReference type="KEGG" id="ajs:Ajs_0699"/>
<dbReference type="eggNOG" id="COG0459">
    <property type="taxonomic scope" value="Bacteria"/>
</dbReference>
<dbReference type="HOGENOM" id="CLU_016503_3_0_4"/>
<dbReference type="Proteomes" id="UP000000645">
    <property type="component" value="Chromosome"/>
</dbReference>
<dbReference type="GO" id="GO:0005737">
    <property type="term" value="C:cytoplasm"/>
    <property type="evidence" value="ECO:0007669"/>
    <property type="project" value="UniProtKB-SubCell"/>
</dbReference>
<dbReference type="GO" id="GO:0005524">
    <property type="term" value="F:ATP binding"/>
    <property type="evidence" value="ECO:0007669"/>
    <property type="project" value="UniProtKB-UniRule"/>
</dbReference>
<dbReference type="GO" id="GO:0140662">
    <property type="term" value="F:ATP-dependent protein folding chaperone"/>
    <property type="evidence" value="ECO:0007669"/>
    <property type="project" value="InterPro"/>
</dbReference>
<dbReference type="GO" id="GO:0016853">
    <property type="term" value="F:isomerase activity"/>
    <property type="evidence" value="ECO:0007669"/>
    <property type="project" value="UniProtKB-KW"/>
</dbReference>
<dbReference type="GO" id="GO:0051082">
    <property type="term" value="F:unfolded protein binding"/>
    <property type="evidence" value="ECO:0007669"/>
    <property type="project" value="UniProtKB-UniRule"/>
</dbReference>
<dbReference type="GO" id="GO:0042026">
    <property type="term" value="P:protein refolding"/>
    <property type="evidence" value="ECO:0007669"/>
    <property type="project" value="UniProtKB-UniRule"/>
</dbReference>
<dbReference type="CDD" id="cd03344">
    <property type="entry name" value="GroEL"/>
    <property type="match status" value="1"/>
</dbReference>
<dbReference type="FunFam" id="1.10.560.10:FF:000001">
    <property type="entry name" value="60 kDa chaperonin"/>
    <property type="match status" value="1"/>
</dbReference>
<dbReference type="FunFam" id="3.50.7.10:FF:000001">
    <property type="entry name" value="60 kDa chaperonin"/>
    <property type="match status" value="1"/>
</dbReference>
<dbReference type="Gene3D" id="3.50.7.10">
    <property type="entry name" value="GroEL"/>
    <property type="match status" value="1"/>
</dbReference>
<dbReference type="Gene3D" id="1.10.560.10">
    <property type="entry name" value="GroEL-like equatorial domain"/>
    <property type="match status" value="1"/>
</dbReference>
<dbReference type="Gene3D" id="3.30.260.10">
    <property type="entry name" value="TCP-1-like chaperonin intermediate domain"/>
    <property type="match status" value="1"/>
</dbReference>
<dbReference type="HAMAP" id="MF_00600">
    <property type="entry name" value="CH60"/>
    <property type="match status" value="1"/>
</dbReference>
<dbReference type="InterPro" id="IPR018370">
    <property type="entry name" value="Chaperonin_Cpn60_CS"/>
</dbReference>
<dbReference type="InterPro" id="IPR001844">
    <property type="entry name" value="Cpn60/GroEL"/>
</dbReference>
<dbReference type="InterPro" id="IPR002423">
    <property type="entry name" value="Cpn60/GroEL/TCP-1"/>
</dbReference>
<dbReference type="InterPro" id="IPR027409">
    <property type="entry name" value="GroEL-like_apical_dom_sf"/>
</dbReference>
<dbReference type="InterPro" id="IPR027413">
    <property type="entry name" value="GROEL-like_equatorial_sf"/>
</dbReference>
<dbReference type="InterPro" id="IPR027410">
    <property type="entry name" value="TCP-1-like_intermed_sf"/>
</dbReference>
<dbReference type="NCBIfam" id="TIGR02348">
    <property type="entry name" value="GroEL"/>
    <property type="match status" value="1"/>
</dbReference>
<dbReference type="NCBIfam" id="NF000592">
    <property type="entry name" value="PRK00013.1"/>
    <property type="match status" value="1"/>
</dbReference>
<dbReference type="NCBIfam" id="NF009487">
    <property type="entry name" value="PRK12849.1"/>
    <property type="match status" value="1"/>
</dbReference>
<dbReference type="NCBIfam" id="NF009488">
    <property type="entry name" value="PRK12850.1"/>
    <property type="match status" value="1"/>
</dbReference>
<dbReference type="NCBIfam" id="NF009489">
    <property type="entry name" value="PRK12851.1"/>
    <property type="match status" value="1"/>
</dbReference>
<dbReference type="PANTHER" id="PTHR45633">
    <property type="entry name" value="60 KDA HEAT SHOCK PROTEIN, MITOCHONDRIAL"/>
    <property type="match status" value="1"/>
</dbReference>
<dbReference type="Pfam" id="PF00118">
    <property type="entry name" value="Cpn60_TCP1"/>
    <property type="match status" value="1"/>
</dbReference>
<dbReference type="PRINTS" id="PR00298">
    <property type="entry name" value="CHAPERONIN60"/>
</dbReference>
<dbReference type="SUPFAM" id="SSF52029">
    <property type="entry name" value="GroEL apical domain-like"/>
    <property type="match status" value="1"/>
</dbReference>
<dbReference type="SUPFAM" id="SSF48592">
    <property type="entry name" value="GroEL equatorial domain-like"/>
    <property type="match status" value="1"/>
</dbReference>
<dbReference type="SUPFAM" id="SSF54849">
    <property type="entry name" value="GroEL-intermediate domain like"/>
    <property type="match status" value="1"/>
</dbReference>
<dbReference type="PROSITE" id="PS00296">
    <property type="entry name" value="CHAPERONINS_CPN60"/>
    <property type="match status" value="1"/>
</dbReference>
<sequence length="546" mass="57197">MAAKDVVFGGEARARMVEGVNILANAVKVTLGPKGRNVVLERSFGAPTVTKDGVSVAKEIELKDKLQNMGAQLVKEVASKTNDIAGDGTTTATVLAQAIVREGSKYVAAGLNPMDLKRGIDKAVVALVEELKKASKATTTSKEIAQVGSISANSDESVGKIIADAMDKVGKEGVITVEDGKSLENELEVVEGMQFDRGYLSPYFINNPEKQAAILDNPFVLLFDKKISNIRDLLPTLEQVAKASRPLLIIAEDVEGEALATLVVNTIRGILKVVAVKAPGFGDRRKAMLEDIAILTGGKVIAEEVGLTLEKVTLADLGQAKRIEVGKENTTIIDGAGAAADIEARVKQIRIQIEEATSDYDREKLQERVAKLAGGVAVIKVGAATEVEMKEKKARVEDALHATRAAVEEGIVAGGGVALLRAKQAVGNLSTGNPEQDAGIKLVLKAVEAPLREIVANAGGEPSVVVNEVLNGKGNYGFNAANDTYGDMLEMGILDPTKVTRTALQNAASVASLLLTTEAMVAEAPKDESAAPAMPGGMGGMGDMGM</sequence>
<feature type="chain" id="PRO_1000025746" description="Chaperonin GroEL">
    <location>
        <begin position="1"/>
        <end position="546"/>
    </location>
</feature>
<feature type="region of interest" description="Disordered" evidence="2">
    <location>
        <begin position="527"/>
        <end position="546"/>
    </location>
</feature>
<feature type="compositionally biased region" description="Gly residues" evidence="2">
    <location>
        <begin position="536"/>
        <end position="546"/>
    </location>
</feature>
<feature type="binding site" evidence="1">
    <location>
        <begin position="30"/>
        <end position="33"/>
    </location>
    <ligand>
        <name>ATP</name>
        <dbReference type="ChEBI" id="CHEBI:30616"/>
    </ligand>
</feature>
<feature type="binding site" evidence="1">
    <location>
        <position position="51"/>
    </location>
    <ligand>
        <name>ATP</name>
        <dbReference type="ChEBI" id="CHEBI:30616"/>
    </ligand>
</feature>
<feature type="binding site" evidence="1">
    <location>
        <begin position="87"/>
        <end position="91"/>
    </location>
    <ligand>
        <name>ATP</name>
        <dbReference type="ChEBI" id="CHEBI:30616"/>
    </ligand>
</feature>
<feature type="binding site" evidence="1">
    <location>
        <position position="415"/>
    </location>
    <ligand>
        <name>ATP</name>
        <dbReference type="ChEBI" id="CHEBI:30616"/>
    </ligand>
</feature>
<feature type="binding site" evidence="1">
    <location>
        <begin position="479"/>
        <end position="481"/>
    </location>
    <ligand>
        <name>ATP</name>
        <dbReference type="ChEBI" id="CHEBI:30616"/>
    </ligand>
</feature>
<feature type="binding site" evidence="1">
    <location>
        <position position="495"/>
    </location>
    <ligand>
        <name>ATP</name>
        <dbReference type="ChEBI" id="CHEBI:30616"/>
    </ligand>
</feature>
<keyword id="KW-0067">ATP-binding</keyword>
<keyword id="KW-0143">Chaperone</keyword>
<keyword id="KW-0963">Cytoplasm</keyword>
<keyword id="KW-0413">Isomerase</keyword>
<keyword id="KW-0547">Nucleotide-binding</keyword>
<protein>
    <recommendedName>
        <fullName evidence="1">Chaperonin GroEL</fullName>
        <ecNumber evidence="1">5.6.1.7</ecNumber>
    </recommendedName>
    <alternativeName>
        <fullName evidence="1">60 kDa chaperonin</fullName>
    </alternativeName>
    <alternativeName>
        <fullName evidence="1">Chaperonin-60</fullName>
        <shortName evidence="1">Cpn60</shortName>
    </alternativeName>
</protein>
<name>CH60_ACISJ</name>
<accession>A1W3W8</accession>
<comment type="function">
    <text evidence="1">Together with its co-chaperonin GroES, plays an essential role in assisting protein folding. The GroEL-GroES system forms a nano-cage that allows encapsulation of the non-native substrate proteins and provides a physical environment optimized to promote and accelerate protein folding.</text>
</comment>
<comment type="catalytic activity">
    <reaction evidence="1">
        <text>ATP + H2O + a folded polypeptide = ADP + phosphate + an unfolded polypeptide.</text>
        <dbReference type="EC" id="5.6.1.7"/>
    </reaction>
</comment>
<comment type="subunit">
    <text evidence="1">Forms a cylinder of 14 subunits composed of two heptameric rings stacked back-to-back. Interacts with the co-chaperonin GroES.</text>
</comment>
<comment type="subcellular location">
    <subcellularLocation>
        <location evidence="1">Cytoplasm</location>
    </subcellularLocation>
</comment>
<comment type="similarity">
    <text evidence="1">Belongs to the chaperonin (HSP60) family.</text>
</comment>
<gene>
    <name evidence="1" type="primary">groEL</name>
    <name evidence="1" type="synonym">groL</name>
    <name type="ordered locus">Ajs_0699</name>
</gene>
<reference key="1">
    <citation type="submission" date="2006-12" db="EMBL/GenBank/DDBJ databases">
        <title>Complete sequence of chromosome 1 of Acidovorax sp. JS42.</title>
        <authorList>
            <person name="Copeland A."/>
            <person name="Lucas S."/>
            <person name="Lapidus A."/>
            <person name="Barry K."/>
            <person name="Detter J.C."/>
            <person name="Glavina del Rio T."/>
            <person name="Dalin E."/>
            <person name="Tice H."/>
            <person name="Pitluck S."/>
            <person name="Chertkov O."/>
            <person name="Brettin T."/>
            <person name="Bruce D."/>
            <person name="Han C."/>
            <person name="Tapia R."/>
            <person name="Gilna P."/>
            <person name="Schmutz J."/>
            <person name="Larimer F."/>
            <person name="Land M."/>
            <person name="Hauser L."/>
            <person name="Kyrpides N."/>
            <person name="Kim E."/>
            <person name="Stahl D."/>
            <person name="Richardson P."/>
        </authorList>
    </citation>
    <scope>NUCLEOTIDE SEQUENCE [LARGE SCALE GENOMIC DNA]</scope>
    <source>
        <strain>JS42</strain>
    </source>
</reference>
<evidence type="ECO:0000255" key="1">
    <source>
        <dbReference type="HAMAP-Rule" id="MF_00600"/>
    </source>
</evidence>
<evidence type="ECO:0000256" key="2">
    <source>
        <dbReference type="SAM" id="MobiDB-lite"/>
    </source>
</evidence>
<proteinExistence type="inferred from homology"/>
<organism>
    <name type="scientific">Acidovorax sp. (strain JS42)</name>
    <dbReference type="NCBI Taxonomy" id="232721"/>
    <lineage>
        <taxon>Bacteria</taxon>
        <taxon>Pseudomonadati</taxon>
        <taxon>Pseudomonadota</taxon>
        <taxon>Betaproteobacteria</taxon>
        <taxon>Burkholderiales</taxon>
        <taxon>Comamonadaceae</taxon>
        <taxon>Acidovorax</taxon>
    </lineage>
</organism>